<proteinExistence type="inferred from homology"/>
<organism>
    <name type="scientific">Vibrio anguillarum (strain ATCC 68554 / 775)</name>
    <name type="common">Listonella anguillarum</name>
    <dbReference type="NCBI Taxonomy" id="882102"/>
    <lineage>
        <taxon>Bacteria</taxon>
        <taxon>Pseudomonadati</taxon>
        <taxon>Pseudomonadota</taxon>
        <taxon>Gammaproteobacteria</taxon>
        <taxon>Vibrionales</taxon>
        <taxon>Vibrionaceae</taxon>
        <taxon>Vibrio</taxon>
    </lineage>
</organism>
<dbReference type="EC" id="2.1.1.298" evidence="1"/>
<dbReference type="EMBL" id="CP002284">
    <property type="protein sequence ID" value="AEH32634.1"/>
    <property type="molecule type" value="Genomic_DNA"/>
</dbReference>
<dbReference type="EMBL" id="L29562">
    <property type="status" value="NOT_ANNOTATED_CDS"/>
    <property type="molecule type" value="Genomic_DNA"/>
</dbReference>
<dbReference type="RefSeq" id="WP_013856325.1">
    <property type="nucleotide sequence ID" value="NC_015633.1"/>
</dbReference>
<dbReference type="SMR" id="P39200"/>
<dbReference type="GeneID" id="83859733"/>
<dbReference type="KEGG" id="van:VAA_03441"/>
<dbReference type="eggNOG" id="COG2890">
    <property type="taxonomic scope" value="Bacteria"/>
</dbReference>
<dbReference type="HOGENOM" id="CLU_018398_5_1_6"/>
<dbReference type="GO" id="GO:0005829">
    <property type="term" value="C:cytosol"/>
    <property type="evidence" value="ECO:0007669"/>
    <property type="project" value="TreeGrafter"/>
</dbReference>
<dbReference type="GO" id="GO:0003676">
    <property type="term" value="F:nucleic acid binding"/>
    <property type="evidence" value="ECO:0007669"/>
    <property type="project" value="InterPro"/>
</dbReference>
<dbReference type="GO" id="GO:0036009">
    <property type="term" value="F:protein-glutamine N-methyltransferase activity"/>
    <property type="evidence" value="ECO:0007669"/>
    <property type="project" value="UniProtKB-UniRule"/>
</dbReference>
<dbReference type="GO" id="GO:0032259">
    <property type="term" value="P:methylation"/>
    <property type="evidence" value="ECO:0007669"/>
    <property type="project" value="UniProtKB-KW"/>
</dbReference>
<dbReference type="CDD" id="cd02440">
    <property type="entry name" value="AdoMet_MTases"/>
    <property type="match status" value="1"/>
</dbReference>
<dbReference type="FunFam" id="1.10.8.10:FF:000022">
    <property type="entry name" value="50S ribosomal protein L3 glutamine methyltransferase"/>
    <property type="match status" value="1"/>
</dbReference>
<dbReference type="FunFam" id="3.40.50.150:FF:000042">
    <property type="entry name" value="50S ribosomal protein L3 glutamine methyltransferase"/>
    <property type="match status" value="1"/>
</dbReference>
<dbReference type="Gene3D" id="1.10.8.10">
    <property type="entry name" value="DNA helicase RuvA subunit, C-terminal domain"/>
    <property type="match status" value="1"/>
</dbReference>
<dbReference type="Gene3D" id="3.40.50.150">
    <property type="entry name" value="Vaccinia Virus protein VP39"/>
    <property type="match status" value="1"/>
</dbReference>
<dbReference type="HAMAP" id="MF_02125">
    <property type="entry name" value="L3_methyltr_PrmB"/>
    <property type="match status" value="1"/>
</dbReference>
<dbReference type="InterPro" id="IPR002052">
    <property type="entry name" value="DNA_methylase_N6_adenine_CS"/>
</dbReference>
<dbReference type="InterPro" id="IPR004556">
    <property type="entry name" value="HemK-like"/>
</dbReference>
<dbReference type="InterPro" id="IPR019874">
    <property type="entry name" value="RF_methyltr_PrmC"/>
</dbReference>
<dbReference type="InterPro" id="IPR017127">
    <property type="entry name" value="Ribosome_uL3_MTase"/>
</dbReference>
<dbReference type="InterPro" id="IPR029063">
    <property type="entry name" value="SAM-dependent_MTases_sf"/>
</dbReference>
<dbReference type="InterPro" id="IPR007848">
    <property type="entry name" value="Small_mtfrase_dom"/>
</dbReference>
<dbReference type="NCBIfam" id="TIGR00536">
    <property type="entry name" value="hemK_fam"/>
    <property type="match status" value="1"/>
</dbReference>
<dbReference type="NCBIfam" id="TIGR03533">
    <property type="entry name" value="L3_gln_methyl"/>
    <property type="match status" value="1"/>
</dbReference>
<dbReference type="NCBIfam" id="TIGR03534">
    <property type="entry name" value="RF_mod_PrmC"/>
    <property type="match status" value="1"/>
</dbReference>
<dbReference type="PANTHER" id="PTHR47806">
    <property type="entry name" value="50S RIBOSOMAL PROTEIN L3 GLUTAMINE METHYLTRANSFERASE"/>
    <property type="match status" value="1"/>
</dbReference>
<dbReference type="PANTHER" id="PTHR47806:SF1">
    <property type="entry name" value="RIBOSOMAL PROTEIN UL3 GLUTAMINE METHYLTRANSFERASE"/>
    <property type="match status" value="1"/>
</dbReference>
<dbReference type="Pfam" id="PF05175">
    <property type="entry name" value="MTS"/>
    <property type="match status" value="1"/>
</dbReference>
<dbReference type="PIRSF" id="PIRSF037167">
    <property type="entry name" value="Mtase_YfcB_prd"/>
    <property type="match status" value="1"/>
</dbReference>
<dbReference type="SUPFAM" id="SSF53335">
    <property type="entry name" value="S-adenosyl-L-methionine-dependent methyltransferases"/>
    <property type="match status" value="1"/>
</dbReference>
<keyword id="KW-0489">Methyltransferase</keyword>
<keyword id="KW-0949">S-adenosyl-L-methionine</keyword>
<keyword id="KW-0808">Transferase</keyword>
<sequence length="310" mass="35164">MDKIFVEEAVSELHTLQDMIRWTVSRFNAANLFYGHGTDNAWDEAVQLILPTLYLPIDVPPHVLNSRLTGSERLRIVERVIKRINERTPIAYLTNKAWFCGLEFYVDERVLVPRSPIGELIEAQFQPWLIDEPVRIMDLCTGSGCIAIACAHAFPDAEVDAIDISTDALQVAEQNIQDHGMEQQVFPIRSDLFRDLPKEKYDLIVSNPPYVDQEDMNSLPKEFKHEPELGLAAGTDGLKLVRRILANAAGYLTDNGILICEVGNSMVHMMNQYDHIPFTWLEFENGGHGVFMLTRQQLVDCASDFALYID</sequence>
<evidence type="ECO:0000255" key="1">
    <source>
        <dbReference type="HAMAP-Rule" id="MF_02125"/>
    </source>
</evidence>
<evidence type="ECO:0000303" key="2">
    <source>
    </source>
</evidence>
<comment type="function">
    <text evidence="1">Methylates large ribosomal subunit protein uL3 on a specific glutamine residue.</text>
</comment>
<comment type="catalytic activity">
    <reaction evidence="1">
        <text>L-glutaminyl-[ribosomal protein uL3] + S-adenosyl-L-methionine = N(5)-methyl-L-glutaminyl-[ribosomal protein uL3] + S-adenosyl-L-homocysteine + H(+)</text>
        <dbReference type="Rhea" id="RHEA:45020"/>
        <dbReference type="Rhea" id="RHEA-COMP:11063"/>
        <dbReference type="Rhea" id="RHEA-COMP:11064"/>
        <dbReference type="ChEBI" id="CHEBI:15378"/>
        <dbReference type="ChEBI" id="CHEBI:30011"/>
        <dbReference type="ChEBI" id="CHEBI:57856"/>
        <dbReference type="ChEBI" id="CHEBI:59789"/>
        <dbReference type="ChEBI" id="CHEBI:61891"/>
        <dbReference type="EC" id="2.1.1.298"/>
    </reaction>
</comment>
<comment type="similarity">
    <text evidence="1">Belongs to the protein N5-glutamine methyltransferase family. PrmB subfamily.</text>
</comment>
<name>PRMB_VIBA7</name>
<gene>
    <name evidence="1" type="primary">prmB</name>
    <name evidence="2" type="synonym">yfcB</name>
    <name type="ordered locus">VAA_03441</name>
</gene>
<feature type="chain" id="PRO_0000088011" description="Ribosomal protein uL3 glutamine methyltransferase">
    <location>
        <begin position="1"/>
        <end position="310"/>
    </location>
</feature>
<accession>P39200</accession>
<accession>F7YND5</accession>
<protein>
    <recommendedName>
        <fullName evidence="1">Ribosomal protein uL3 glutamine methyltransferase</fullName>
        <shortName evidence="1">uL3 MTase</shortName>
        <ecNumber evidence="1">2.1.1.298</ecNumber>
    </recommendedName>
    <alternativeName>
        <fullName evidence="1">N5-glutamine methyltransferase PrmB</fullName>
    </alternativeName>
</protein>
<reference key="1">
    <citation type="journal article" date="2011" name="Infect. Immun.">
        <title>Complete genome sequence of the marine fish pathogen Vibrio anguillarum harboring the pJM1 virulence plasmid and genomic comparison with other virulent strains of V. anguillarum and V. ordalii.</title>
        <authorList>
            <person name="Naka H."/>
            <person name="Dias G.M."/>
            <person name="Thompson C.C."/>
            <person name="Dubay C."/>
            <person name="Thompson F.L."/>
            <person name="Crosa J.H."/>
        </authorList>
    </citation>
    <scope>NUCLEOTIDE SEQUENCE [LARGE SCALE GENOMIC DNA]</scope>
    <source>
        <strain>ATCC 68554 / 775</strain>
    </source>
</reference>
<reference key="2">
    <citation type="journal article" date="1994" name="J. Bacteriol.">
        <title>Chromosome-mediated 2,3-dihydroxybenzoic acid is a precursor in the biosynthesis of the plasmid-mediated siderophore anguibactin in Vibrio anguillarum.</title>
        <authorList>
            <person name="Chen Q."/>
            <person name="Actis L.A."/>
            <person name="Tolmasky M.E."/>
            <person name="Crosa J.H."/>
        </authorList>
    </citation>
    <scope>NUCLEOTIDE SEQUENCE [GENOMIC DNA] OF 163-310</scope>
    <source>
        <strain>ATCC 68554 / 775</strain>
    </source>
</reference>
<reference key="3">
    <citation type="journal article" date="1994" name="Nucleic Acids Res.">
        <title>Intrinsic and extrinsic approaches for detecting genes in a bacterial genome.</title>
        <authorList>
            <person name="Borodovsky M."/>
            <person name="Rudd K.E."/>
            <person name="Koonin E.V."/>
        </authorList>
    </citation>
    <scope>IDENTIFICATION</scope>
</reference>